<organism>
    <name type="scientific">Homo sapiens</name>
    <name type="common">Human</name>
    <dbReference type="NCBI Taxonomy" id="9606"/>
    <lineage>
        <taxon>Eukaryota</taxon>
        <taxon>Metazoa</taxon>
        <taxon>Chordata</taxon>
        <taxon>Craniata</taxon>
        <taxon>Vertebrata</taxon>
        <taxon>Euteleostomi</taxon>
        <taxon>Mammalia</taxon>
        <taxon>Eutheria</taxon>
        <taxon>Euarchontoglires</taxon>
        <taxon>Primates</taxon>
        <taxon>Haplorrhini</taxon>
        <taxon>Catarrhini</taxon>
        <taxon>Hominidae</taxon>
        <taxon>Homo</taxon>
    </lineage>
</organism>
<name>CP4FN_HUMAN</name>
<gene>
    <name evidence="5 8" type="primary">CYP4F22</name>
</gene>
<reference key="1">
    <citation type="journal article" date="2004" name="Nat. Genet.">
        <title>Complete sequencing and characterization of 21,243 full-length human cDNAs.</title>
        <authorList>
            <person name="Ota T."/>
            <person name="Suzuki Y."/>
            <person name="Nishikawa T."/>
            <person name="Otsuki T."/>
            <person name="Sugiyama T."/>
            <person name="Irie R."/>
            <person name="Wakamatsu A."/>
            <person name="Hayashi K."/>
            <person name="Sato H."/>
            <person name="Nagai K."/>
            <person name="Kimura K."/>
            <person name="Makita H."/>
            <person name="Sekine M."/>
            <person name="Obayashi M."/>
            <person name="Nishi T."/>
            <person name="Shibahara T."/>
            <person name="Tanaka T."/>
            <person name="Ishii S."/>
            <person name="Yamamoto J."/>
            <person name="Saito K."/>
            <person name="Kawai Y."/>
            <person name="Isono Y."/>
            <person name="Nakamura Y."/>
            <person name="Nagahari K."/>
            <person name="Murakami K."/>
            <person name="Yasuda T."/>
            <person name="Iwayanagi T."/>
            <person name="Wagatsuma M."/>
            <person name="Shiratori A."/>
            <person name="Sudo H."/>
            <person name="Hosoiri T."/>
            <person name="Kaku Y."/>
            <person name="Kodaira H."/>
            <person name="Kondo H."/>
            <person name="Sugawara M."/>
            <person name="Takahashi M."/>
            <person name="Kanda K."/>
            <person name="Yokoi T."/>
            <person name="Furuya T."/>
            <person name="Kikkawa E."/>
            <person name="Omura Y."/>
            <person name="Abe K."/>
            <person name="Kamihara K."/>
            <person name="Katsuta N."/>
            <person name="Sato K."/>
            <person name="Tanikawa M."/>
            <person name="Yamazaki M."/>
            <person name="Ninomiya K."/>
            <person name="Ishibashi T."/>
            <person name="Yamashita H."/>
            <person name="Murakawa K."/>
            <person name="Fujimori K."/>
            <person name="Tanai H."/>
            <person name="Kimata M."/>
            <person name="Watanabe M."/>
            <person name="Hiraoka S."/>
            <person name="Chiba Y."/>
            <person name="Ishida S."/>
            <person name="Ono Y."/>
            <person name="Takiguchi S."/>
            <person name="Watanabe S."/>
            <person name="Yosida M."/>
            <person name="Hotuta T."/>
            <person name="Kusano J."/>
            <person name="Kanehori K."/>
            <person name="Takahashi-Fujii A."/>
            <person name="Hara H."/>
            <person name="Tanase T.-O."/>
            <person name="Nomura Y."/>
            <person name="Togiya S."/>
            <person name="Komai F."/>
            <person name="Hara R."/>
            <person name="Takeuchi K."/>
            <person name="Arita M."/>
            <person name="Imose N."/>
            <person name="Musashino K."/>
            <person name="Yuuki H."/>
            <person name="Oshima A."/>
            <person name="Sasaki N."/>
            <person name="Aotsuka S."/>
            <person name="Yoshikawa Y."/>
            <person name="Matsunawa H."/>
            <person name="Ichihara T."/>
            <person name="Shiohata N."/>
            <person name="Sano S."/>
            <person name="Moriya S."/>
            <person name="Momiyama H."/>
            <person name="Satoh N."/>
            <person name="Takami S."/>
            <person name="Terashima Y."/>
            <person name="Suzuki O."/>
            <person name="Nakagawa S."/>
            <person name="Senoh A."/>
            <person name="Mizoguchi H."/>
            <person name="Goto Y."/>
            <person name="Shimizu F."/>
            <person name="Wakebe H."/>
            <person name="Hishigaki H."/>
            <person name="Watanabe T."/>
            <person name="Sugiyama A."/>
            <person name="Takemoto M."/>
            <person name="Kawakami B."/>
            <person name="Yamazaki M."/>
            <person name="Watanabe K."/>
            <person name="Kumagai A."/>
            <person name="Itakura S."/>
            <person name="Fukuzumi Y."/>
            <person name="Fujimori Y."/>
            <person name="Komiyama M."/>
            <person name="Tashiro H."/>
            <person name="Tanigami A."/>
            <person name="Fujiwara T."/>
            <person name="Ono T."/>
            <person name="Yamada K."/>
            <person name="Fujii Y."/>
            <person name="Ozaki K."/>
            <person name="Hirao M."/>
            <person name="Ohmori Y."/>
            <person name="Kawabata A."/>
            <person name="Hikiji T."/>
            <person name="Kobatake N."/>
            <person name="Inagaki H."/>
            <person name="Ikema Y."/>
            <person name="Okamoto S."/>
            <person name="Okitani R."/>
            <person name="Kawakami T."/>
            <person name="Noguchi S."/>
            <person name="Itoh T."/>
            <person name="Shigeta K."/>
            <person name="Senba T."/>
            <person name="Matsumura K."/>
            <person name="Nakajima Y."/>
            <person name="Mizuno T."/>
            <person name="Morinaga M."/>
            <person name="Sasaki M."/>
            <person name="Togashi T."/>
            <person name="Oyama M."/>
            <person name="Hata H."/>
            <person name="Watanabe M."/>
            <person name="Komatsu T."/>
            <person name="Mizushima-Sugano J."/>
            <person name="Satoh T."/>
            <person name="Shirai Y."/>
            <person name="Takahashi Y."/>
            <person name="Nakagawa K."/>
            <person name="Okumura K."/>
            <person name="Nagase T."/>
            <person name="Nomura N."/>
            <person name="Kikuchi H."/>
            <person name="Masuho Y."/>
            <person name="Yamashita R."/>
            <person name="Nakai K."/>
            <person name="Yada T."/>
            <person name="Nakamura Y."/>
            <person name="Ohara O."/>
            <person name="Isogai T."/>
            <person name="Sugano S."/>
        </authorList>
    </citation>
    <scope>NUCLEOTIDE SEQUENCE [LARGE SCALE MRNA]</scope>
    <source>
        <tissue>Prostate</tissue>
    </source>
</reference>
<reference key="2">
    <citation type="journal article" date="2004" name="Genome Res.">
        <title>The status, quality, and expansion of the NIH full-length cDNA project: the Mammalian Gene Collection (MGC).</title>
        <authorList>
            <consortium name="The MGC Project Team"/>
        </authorList>
    </citation>
    <scope>NUCLEOTIDE SEQUENCE [LARGE SCALE MRNA]</scope>
</reference>
<reference key="3">
    <citation type="journal article" date="2015" name="Proc. Natl. Acad. Sci. U.S.A.">
        <title>Essential role of the cytochrome P450 CYP4F22 in the production of acylceramide, the key lipid for skin permeability barrier formation.</title>
        <authorList>
            <person name="Ohno Y."/>
            <person name="Nakamichi S."/>
            <person name="Ohkuni A."/>
            <person name="Kamiyama N."/>
            <person name="Naoe A."/>
            <person name="Tsujimura H."/>
            <person name="Yokose U."/>
            <person name="Sugiura K."/>
            <person name="Ishikawa J."/>
            <person name="Akiyama M."/>
            <person name="Kihara A."/>
        </authorList>
    </citation>
    <scope>FUNCTION</scope>
    <scope>CATALYTIC ACTIVITY</scope>
    <scope>VARIANTS ARCI5 LEU-59; HIS-243; TRP-372; TYR-435 AND ASP-436</scope>
    <scope>SUBCELLULAR LOCATION</scope>
    <scope>TOPOLOGY</scope>
    <scope>CAUTION</scope>
</reference>
<reference key="4">
    <citation type="journal article" date="2006" name="Hum. Mol. Genet.">
        <title>Mutations in a new cytochrome P450 gene in lamellar ichthyosis type 3.</title>
        <authorList>
            <person name="Lefevre C."/>
            <person name="Bouadjar B."/>
            <person name="Ferrand V."/>
            <person name="Tadini G."/>
            <person name="Megarbane A."/>
            <person name="Lathrop M."/>
            <person name="Prud'homme J.-F."/>
            <person name="Fischer J."/>
        </authorList>
    </citation>
    <scope>VARIANTS ARCI5 LEU-59; HIS-243; TRP-372; TYR-435 AND ASP-436</scope>
</reference>
<accession>Q6NT55</accession>
<accession>Q8N8H4</accession>
<sequence length="531" mass="61958">MLPITDRLLHLLGLEKTAFRIYAVSTLLLFLLFFLFRLLLRFLRLCRSFYITCRRLRCFPQPPRRNWLLGHLGMYLPNEAGLQDEKKVLDNMHHVLLVWMGPVLPLLVLVHPDYIKPLLGASAAIAPKDDLFYGFLKPWLGDGLLLSKGDKWSRHRRLLTPAFHFDILKPYMKIFNQSADIMHAKWRHLAEGSAVSLDMFEHISLMTLDSLQKCVFSYNSNCQEKMSDYISAIIELSALSVRRQYRLHHYLDFIYYRSADGRRFRQACDMVHHFTTEVIQERRRALRQQGAEAWLKAKQGKTLDFIDVLLLARDEDGKELSDEDIRAEADTFMFEGHDTTSSGISWMLFNLAKYPEYQEKCREEIQEVMKGRELEELEWDDLTQLPFTTMCIKESLRQYPPVTLVSRQCTEDIKLPDGRIIPKGIICLVSIYGTHHNPTVWPDSKVYNPYRFDPDNPQQRSPLAYVPFSAGPRNCIGQSFAMAELRVVVALTLLRFRLSVDRTRKVRRKPELILRTENGLWLKVEPLPPRA</sequence>
<feature type="chain" id="PRO_0000293731" description="Ultra-long-chain fatty acid omega-hydroxylase">
    <location>
        <begin position="1"/>
        <end position="531"/>
    </location>
</feature>
<feature type="topological domain" description="Lumenal" evidence="7">
    <location>
        <begin position="1"/>
        <end position="22"/>
    </location>
</feature>
<feature type="transmembrane region" description="Helical" evidence="2 7">
    <location>
        <begin position="23"/>
        <end position="43"/>
    </location>
</feature>
<feature type="topological domain" description="Cytoplasmic" evidence="7">
    <location>
        <begin position="44"/>
        <end position="531"/>
    </location>
</feature>
<feature type="binding site" description="covalent" evidence="1">
    <location>
        <position position="335"/>
    </location>
    <ligand>
        <name>heme</name>
        <dbReference type="ChEBI" id="CHEBI:30413"/>
    </ligand>
</feature>
<feature type="binding site" description="axial binding residue" evidence="1">
    <location>
        <position position="475"/>
    </location>
    <ligand>
        <name>heme</name>
        <dbReference type="ChEBI" id="CHEBI:30413"/>
    </ligand>
    <ligandPart>
        <name>Fe</name>
        <dbReference type="ChEBI" id="CHEBI:18248"/>
    </ligandPart>
</feature>
<feature type="sequence variant" id="VAR_037441" description="In ARCI5; results in decreased synthesis of omega-hydroxyceramides; dbSNP:rs118091316." evidence="3 4">
    <original>F</original>
    <variation>L</variation>
    <location>
        <position position="59"/>
    </location>
</feature>
<feature type="sequence variant" id="VAR_033118" description="In dbSNP:rs16980531.">
    <original>S</original>
    <variation>C</variation>
    <location>
        <position position="178"/>
    </location>
</feature>
<feature type="sequence variant" id="VAR_037442" description="In ARCI5; results in decreased synthesis of omega-hydroxyceramides; dbSNP:rs118203937." evidence="3 4">
    <original>R</original>
    <variation>H</variation>
    <location>
        <position position="243"/>
    </location>
</feature>
<feature type="sequence variant" id="VAR_037443" description="In ARCI5; results in decreased synthesis of omega-hydroxyceramides; dbSNP:rs201129618." evidence="3 4">
    <original>R</original>
    <variation>W</variation>
    <location>
        <position position="372"/>
    </location>
</feature>
<feature type="sequence variant" id="VAR_037444" description="In ARCI5; results in impaired synthesis of omega-hydroxyceramides; dbSNP:rs118203935." evidence="3 4">
    <original>H</original>
    <variation>Y</variation>
    <location>
        <position position="435"/>
    </location>
</feature>
<feature type="sequence variant" id="VAR_037445" description="In ARCI5; results in impaired synthesis of omega-hydroxyceramides; dbSNP:rs118203936." evidence="3 4">
    <original>H</original>
    <variation>D</variation>
    <location>
        <position position="436"/>
    </location>
</feature>
<feature type="sequence variant" id="VAR_033119" description="In dbSNP:rs7256787.">
    <original>K</original>
    <variation>Q</variation>
    <location>
        <position position="505"/>
    </location>
</feature>
<feature type="sequence conflict" description="In Ref. 1; BAC04868." evidence="6" ref="1">
    <original>I</original>
    <variation>T</variation>
    <location>
        <position position="125"/>
    </location>
</feature>
<feature type="sequence conflict" description="In Ref. 1; BAC04868." evidence="6" ref="1">
    <original>Q</original>
    <variation>R</variation>
    <location>
        <position position="288"/>
    </location>
</feature>
<comment type="function">
    <text evidence="4">A cytochrome P450 monooxygenase involved in epidermal ceramide biosynthesis. Hydroxylates the terminal carbon (omega-hydroxylation) of ultra-long-chain fatty acyls (C28-C36) prior to ceramide synthesis (PubMed:26056268). Contributes to the synthesis of three classes of omega-hydroxy-ultra-long chain fatty acylceramides having sphingosine, 6-hydroxysphingosine and phytosphingosine bases, all major lipid components that underlie the permeability barrier of the stratum corneum (PubMed:26056268). Mechanistically, uses molecular oxygen inserting one oxygen atom into a substrate, and reducing the second into a water molecule, with two electrons provided by NADPH via cytochrome P450 reductase (CPR; NADPH-ferrihemoprotein reductase) (PubMed:26056268).</text>
</comment>
<comment type="catalytic activity">
    <reaction evidence="4">
        <text>triacontanoate + reduced [NADPH--hemoprotein reductase] + O2 = omega-hydroxy-triacontanoate + oxidized [NADPH--hemoprotein reductase] + H2O + H(+)</text>
        <dbReference type="Rhea" id="RHEA:50336"/>
        <dbReference type="Rhea" id="RHEA-COMP:11964"/>
        <dbReference type="Rhea" id="RHEA-COMP:11965"/>
        <dbReference type="ChEBI" id="CHEBI:15377"/>
        <dbReference type="ChEBI" id="CHEBI:15378"/>
        <dbReference type="ChEBI" id="CHEBI:15379"/>
        <dbReference type="ChEBI" id="CHEBI:31004"/>
        <dbReference type="ChEBI" id="CHEBI:57618"/>
        <dbReference type="ChEBI" id="CHEBI:58210"/>
        <dbReference type="ChEBI" id="CHEBI:76044"/>
    </reaction>
    <physiologicalReaction direction="left-to-right" evidence="7">
        <dbReference type="Rhea" id="RHEA:50337"/>
    </physiologicalReaction>
</comment>
<comment type="catalytic activity">
    <reaction evidence="4">
        <text>an omega-methyl-ultra-long-chain fatty acid + reduced [NADPH--hemoprotein reductase] + O2 = an omega-hydroxy-ultra-long-chain fatty acid + oxidized [NADPH--hemoprotein reductase] + H2O + H(+)</text>
        <dbReference type="Rhea" id="RHEA:63376"/>
        <dbReference type="Rhea" id="RHEA-COMP:11964"/>
        <dbReference type="Rhea" id="RHEA-COMP:11965"/>
        <dbReference type="ChEBI" id="CHEBI:15377"/>
        <dbReference type="ChEBI" id="CHEBI:15378"/>
        <dbReference type="ChEBI" id="CHEBI:15379"/>
        <dbReference type="ChEBI" id="CHEBI:57618"/>
        <dbReference type="ChEBI" id="CHEBI:58210"/>
        <dbReference type="ChEBI" id="CHEBI:147288"/>
        <dbReference type="ChEBI" id="CHEBI:147293"/>
        <dbReference type="EC" id="1.14.14.177"/>
    </reaction>
    <physiologicalReaction direction="left-to-right" evidence="7">
        <dbReference type="Rhea" id="RHEA:63377"/>
    </physiologicalReaction>
</comment>
<comment type="cofactor">
    <cofactor evidence="1">
        <name>heme</name>
        <dbReference type="ChEBI" id="CHEBI:30413"/>
    </cofactor>
</comment>
<comment type="interaction">
    <interactant intactId="EBI-17509525">
        <id>Q6NT55</id>
    </interactant>
    <interactant intactId="EBI-13059134">
        <id>Q13520</id>
        <label>AQP6</label>
    </interactant>
    <organismsDiffer>false</organismsDiffer>
    <experiments>3</experiments>
</comment>
<comment type="interaction">
    <interactant intactId="EBI-17509525">
        <id>Q6NT55</id>
    </interactant>
    <interactant intactId="EBI-949102">
        <id>Q15800</id>
        <label>MSMO1</label>
    </interactant>
    <organismsDiffer>false</organismsDiffer>
    <experiments>3</experiments>
</comment>
<comment type="interaction">
    <interactant intactId="EBI-17509525">
        <id>Q6NT55</id>
    </interactant>
    <interactant intactId="EBI-11337973">
        <id>Q9BRK0</id>
        <label>REEP2</label>
    </interactant>
    <organismsDiffer>false</organismsDiffer>
    <experiments>3</experiments>
</comment>
<comment type="interaction">
    <interactant intactId="EBI-17509525">
        <id>Q6NT55</id>
    </interactant>
    <interactant intactId="EBI-12947623">
        <id>Q96MV1</id>
        <label>TLCD4</label>
    </interactant>
    <organismsDiffer>false</organismsDiffer>
    <experiments>3</experiments>
</comment>
<comment type="subcellular location">
    <subcellularLocation>
        <location evidence="4">Endoplasmic reticulum membrane</location>
        <topology evidence="4">Single-pass type I membrane protein</topology>
    </subcellularLocation>
    <subcellularLocation>
        <location evidence="4">Microsome membrane</location>
        <topology evidence="4">Single-pass type I membrane protein</topology>
    </subcellularLocation>
</comment>
<comment type="disease" evidence="3 4">
    <disease id="DI-00589">
        <name>Ichthyosis, congenital, autosomal recessive 5</name>
        <acronym>ARCI5</acronym>
        <description>A form of autosomal recessive congenital ichthyosis, a disorder of keratinization with abnormal differentiation and desquamation of the epidermis, resulting in abnormal skin scaling over the whole body. The main skin phenotypes are lamellar ichthyosis (LI) and non-bullous congenital ichthyosiform erythroderma (NCIE), although phenotypic overlap within the same patient or among patients from the same family can occur. Lamellar ichthyosis is a condition often associated with an embedment in a collodion-like membrane at birth; skin scales later develop, covering the entire body surface. Non-bullous congenital ichthyosiform erythroderma characterized by fine whitish scaling on an erythrodermal background; larger brownish scales are present on the buttocks, neck and legs.</description>
        <dbReference type="MIM" id="604777"/>
    </disease>
    <text>The disease is caused by variants affecting the gene represented in this entry.</text>
</comment>
<comment type="similarity">
    <text evidence="6">Belongs to the cytochrome P450 family.</text>
</comment>
<comment type="caution">
    <text evidence="7">A second transmembrane domain at positions 95-115 is predicted by three programs ESKW, MEMSAT and Phobius. However experimental evidence supports the presence of a single signal-anchor transmembrane domain at the N-terminus.</text>
</comment>
<keyword id="KW-0256">Endoplasmic reticulum</keyword>
<keyword id="KW-0349">Heme</keyword>
<keyword id="KW-0977">Ichthyosis</keyword>
<keyword id="KW-0408">Iron</keyword>
<keyword id="KW-0443">Lipid metabolism</keyword>
<keyword id="KW-0472">Membrane</keyword>
<keyword id="KW-0479">Metal-binding</keyword>
<keyword id="KW-0492">Microsome</keyword>
<keyword id="KW-0503">Monooxygenase</keyword>
<keyword id="KW-0560">Oxidoreductase</keyword>
<keyword id="KW-1267">Proteomics identification</keyword>
<keyword id="KW-1185">Reference proteome</keyword>
<keyword id="KW-0812">Transmembrane</keyword>
<keyword id="KW-1133">Transmembrane helix</keyword>
<proteinExistence type="evidence at protein level"/>
<protein>
    <recommendedName>
        <fullName evidence="6">Ultra-long-chain fatty acid omega-hydroxylase</fullName>
        <ecNumber evidence="4">1.14.14.177</ecNumber>
    </recommendedName>
    <alternativeName>
        <fullName evidence="5">Cytochrome P450 4F22</fullName>
    </alternativeName>
</protein>
<dbReference type="EC" id="1.14.14.177" evidence="4"/>
<dbReference type="EMBL" id="AK096820">
    <property type="protein sequence ID" value="BAC04868.1"/>
    <property type="molecule type" value="mRNA"/>
</dbReference>
<dbReference type="EMBL" id="BC069351">
    <property type="protein sequence ID" value="AAH69351.1"/>
    <property type="molecule type" value="mRNA"/>
</dbReference>
<dbReference type="EMBL" id="BC093894">
    <property type="protein sequence ID" value="AAH93894.1"/>
    <property type="molecule type" value="mRNA"/>
</dbReference>
<dbReference type="EMBL" id="BC093896">
    <property type="protein sequence ID" value="AAH93896.1"/>
    <property type="molecule type" value="mRNA"/>
</dbReference>
<dbReference type="CCDS" id="CCDS12331.1"/>
<dbReference type="RefSeq" id="NP_775754.2">
    <property type="nucleotide sequence ID" value="NM_173483.4"/>
</dbReference>
<dbReference type="RefSeq" id="XP_011525994.1">
    <property type="nucleotide sequence ID" value="XM_011527692.3"/>
</dbReference>
<dbReference type="RefSeq" id="XP_011525995.1">
    <property type="nucleotide sequence ID" value="XM_011527693.3"/>
</dbReference>
<dbReference type="RefSeq" id="XP_054175788.1">
    <property type="nucleotide sequence ID" value="XM_054319813.1"/>
</dbReference>
<dbReference type="RefSeq" id="XP_054175789.1">
    <property type="nucleotide sequence ID" value="XM_054319814.1"/>
</dbReference>
<dbReference type="SMR" id="Q6NT55"/>
<dbReference type="BioGRID" id="125990">
    <property type="interactions" value="32"/>
</dbReference>
<dbReference type="FunCoup" id="Q6NT55">
    <property type="interactions" value="182"/>
</dbReference>
<dbReference type="IntAct" id="Q6NT55">
    <property type="interactions" value="14"/>
</dbReference>
<dbReference type="STRING" id="9606.ENSP00000269703"/>
<dbReference type="SwissLipids" id="SLP:000001622"/>
<dbReference type="iPTMnet" id="Q6NT55"/>
<dbReference type="PhosphoSitePlus" id="Q6NT55"/>
<dbReference type="BioMuta" id="CYP4F22"/>
<dbReference type="DMDM" id="74748981"/>
<dbReference type="jPOST" id="Q6NT55"/>
<dbReference type="MassIVE" id="Q6NT55"/>
<dbReference type="PaxDb" id="9606-ENSP00000269703"/>
<dbReference type="PeptideAtlas" id="Q6NT55"/>
<dbReference type="ProteomicsDB" id="66660"/>
<dbReference type="Antibodypedia" id="27086">
    <property type="antibodies" value="79 antibodies from 17 providers"/>
</dbReference>
<dbReference type="DNASU" id="126410"/>
<dbReference type="Ensembl" id="ENST00000269703.8">
    <property type="protein sequence ID" value="ENSP00000269703.1"/>
    <property type="gene ID" value="ENSG00000171954.13"/>
</dbReference>
<dbReference type="Ensembl" id="ENST00000601005.2">
    <property type="protein sequence ID" value="ENSP00000469866.1"/>
    <property type="gene ID" value="ENSG00000171954.13"/>
</dbReference>
<dbReference type="GeneID" id="126410"/>
<dbReference type="KEGG" id="hsa:126410"/>
<dbReference type="MANE-Select" id="ENST00000269703.8">
    <property type="protein sequence ID" value="ENSP00000269703.1"/>
    <property type="RefSeq nucleotide sequence ID" value="NM_173483.4"/>
    <property type="RefSeq protein sequence ID" value="NP_775754.2"/>
</dbReference>
<dbReference type="UCSC" id="uc002nbh.5">
    <property type="organism name" value="human"/>
</dbReference>
<dbReference type="AGR" id="HGNC:26820"/>
<dbReference type="CTD" id="126410"/>
<dbReference type="DisGeNET" id="126410"/>
<dbReference type="GeneCards" id="CYP4F22"/>
<dbReference type="HGNC" id="HGNC:26820">
    <property type="gene designation" value="CYP4F22"/>
</dbReference>
<dbReference type="HPA" id="ENSG00000171954">
    <property type="expression patterns" value="Tissue enhanced (esophagus, skin, vagina)"/>
</dbReference>
<dbReference type="MalaCards" id="CYP4F22"/>
<dbReference type="MIM" id="604777">
    <property type="type" value="phenotype"/>
</dbReference>
<dbReference type="MIM" id="611495">
    <property type="type" value="gene"/>
</dbReference>
<dbReference type="neXtProt" id="NX_Q6NT55"/>
<dbReference type="OpenTargets" id="ENSG00000171954"/>
<dbReference type="Orphanet" id="313">
    <property type="disease" value="Lamellar ichthyosis"/>
</dbReference>
<dbReference type="PharmGKB" id="PA162383112"/>
<dbReference type="VEuPathDB" id="HostDB:ENSG00000171954"/>
<dbReference type="eggNOG" id="KOG0157">
    <property type="taxonomic scope" value="Eukaryota"/>
</dbReference>
<dbReference type="GeneTree" id="ENSGT00940000161507"/>
<dbReference type="HOGENOM" id="CLU_001570_5_1_1"/>
<dbReference type="InParanoid" id="Q6NT55"/>
<dbReference type="OMA" id="HEPNWQL"/>
<dbReference type="OrthoDB" id="1470350at2759"/>
<dbReference type="PAN-GO" id="Q6NT55">
    <property type="GO annotations" value="2 GO annotations based on evolutionary models"/>
</dbReference>
<dbReference type="PhylomeDB" id="Q6NT55"/>
<dbReference type="TreeFam" id="TF105088"/>
<dbReference type="BioCyc" id="MetaCyc:ENSG00000171954-MONOMER"/>
<dbReference type="BRENDA" id="1.14.14.177">
    <property type="organism ID" value="2681"/>
</dbReference>
<dbReference type="PathwayCommons" id="Q6NT55"/>
<dbReference type="Reactome" id="R-HSA-211935">
    <property type="pathway name" value="Fatty acids"/>
</dbReference>
<dbReference type="Reactome" id="R-HSA-211958">
    <property type="pathway name" value="Miscellaneous substrates"/>
</dbReference>
<dbReference type="Reactome" id="R-HSA-211979">
    <property type="pathway name" value="Eicosanoids"/>
</dbReference>
<dbReference type="Reactome" id="R-HSA-2142691">
    <property type="pathway name" value="Synthesis of Leukotrienes (LT) and Eoxins (EX)"/>
</dbReference>
<dbReference type="Reactome" id="R-HSA-5579005">
    <property type="pathway name" value="Defective CYP4F22 causes ARCI5"/>
</dbReference>
<dbReference type="SignaLink" id="Q6NT55"/>
<dbReference type="BioGRID-ORCS" id="126410">
    <property type="hits" value="8 hits in 1145 CRISPR screens"/>
</dbReference>
<dbReference type="ChiTaRS" id="CYP4F22">
    <property type="organism name" value="human"/>
</dbReference>
<dbReference type="GeneWiki" id="CYP4F22"/>
<dbReference type="GenomeRNAi" id="126410"/>
<dbReference type="Pharos" id="Q6NT55">
    <property type="development level" value="Tbio"/>
</dbReference>
<dbReference type="PRO" id="PR:Q6NT55"/>
<dbReference type="Proteomes" id="UP000005640">
    <property type="component" value="Chromosome 19"/>
</dbReference>
<dbReference type="RNAct" id="Q6NT55">
    <property type="molecule type" value="protein"/>
</dbReference>
<dbReference type="Bgee" id="ENSG00000171954">
    <property type="expression patterns" value="Expressed in lower esophagus mucosa and 73 other cell types or tissues"/>
</dbReference>
<dbReference type="GO" id="GO:0005789">
    <property type="term" value="C:endoplasmic reticulum membrane"/>
    <property type="evidence" value="ECO:0000314"/>
    <property type="project" value="UniProtKB"/>
</dbReference>
<dbReference type="GO" id="GO:0020037">
    <property type="term" value="F:heme binding"/>
    <property type="evidence" value="ECO:0007669"/>
    <property type="project" value="InterPro"/>
</dbReference>
<dbReference type="GO" id="GO:0005506">
    <property type="term" value="F:iron ion binding"/>
    <property type="evidence" value="ECO:0007669"/>
    <property type="project" value="InterPro"/>
</dbReference>
<dbReference type="GO" id="GO:0004497">
    <property type="term" value="F:monooxygenase activity"/>
    <property type="evidence" value="ECO:0000314"/>
    <property type="project" value="UniProtKB"/>
</dbReference>
<dbReference type="GO" id="GO:0016705">
    <property type="term" value="F:oxidoreductase activity, acting on paired donors, with incorporation or reduction of molecular oxygen"/>
    <property type="evidence" value="ECO:0007669"/>
    <property type="project" value="InterPro"/>
</dbReference>
<dbReference type="GO" id="GO:0046513">
    <property type="term" value="P:ceramide biosynthetic process"/>
    <property type="evidence" value="ECO:0000315"/>
    <property type="project" value="UniProtKB"/>
</dbReference>
<dbReference type="GO" id="GO:0006690">
    <property type="term" value="P:icosanoid metabolic process"/>
    <property type="evidence" value="ECO:0000304"/>
    <property type="project" value="Reactome"/>
</dbReference>
<dbReference type="CDD" id="cd20679">
    <property type="entry name" value="CYP4F"/>
    <property type="match status" value="1"/>
</dbReference>
<dbReference type="FunFam" id="1.10.630.10:FF:000005">
    <property type="entry name" value="cytochrome P450 4F22 isoform X2"/>
    <property type="match status" value="1"/>
</dbReference>
<dbReference type="Gene3D" id="1.10.630.10">
    <property type="entry name" value="Cytochrome P450"/>
    <property type="match status" value="1"/>
</dbReference>
<dbReference type="InterPro" id="IPR001128">
    <property type="entry name" value="Cyt_P450"/>
</dbReference>
<dbReference type="InterPro" id="IPR017972">
    <property type="entry name" value="Cyt_P450_CS"/>
</dbReference>
<dbReference type="InterPro" id="IPR002401">
    <property type="entry name" value="Cyt_P450_E_grp-I"/>
</dbReference>
<dbReference type="InterPro" id="IPR036396">
    <property type="entry name" value="Cyt_P450_sf"/>
</dbReference>
<dbReference type="InterPro" id="IPR050196">
    <property type="entry name" value="Cytochrome_P450_Monoox"/>
</dbReference>
<dbReference type="PANTHER" id="PTHR24291">
    <property type="entry name" value="CYTOCHROME P450 FAMILY 4"/>
    <property type="match status" value="1"/>
</dbReference>
<dbReference type="PANTHER" id="PTHR24291:SF53">
    <property type="entry name" value="ULTRA-LONG-CHAIN FATTY ACID OMEGA-HYDROXYLASE"/>
    <property type="match status" value="1"/>
</dbReference>
<dbReference type="Pfam" id="PF00067">
    <property type="entry name" value="p450"/>
    <property type="match status" value="1"/>
</dbReference>
<dbReference type="PRINTS" id="PR00463">
    <property type="entry name" value="EP450I"/>
</dbReference>
<dbReference type="PRINTS" id="PR00385">
    <property type="entry name" value="P450"/>
</dbReference>
<dbReference type="SUPFAM" id="SSF48264">
    <property type="entry name" value="Cytochrome P450"/>
    <property type="match status" value="1"/>
</dbReference>
<dbReference type="PROSITE" id="PS00086">
    <property type="entry name" value="CYTOCHROME_P450"/>
    <property type="match status" value="1"/>
</dbReference>
<evidence type="ECO:0000250" key="1">
    <source>
        <dbReference type="UniProtKB" id="P51869"/>
    </source>
</evidence>
<evidence type="ECO:0000255" key="2"/>
<evidence type="ECO:0000269" key="3">
    <source>
    </source>
</evidence>
<evidence type="ECO:0000269" key="4">
    <source>
    </source>
</evidence>
<evidence type="ECO:0000303" key="5">
    <source>
    </source>
</evidence>
<evidence type="ECO:0000305" key="6"/>
<evidence type="ECO:0000305" key="7">
    <source>
    </source>
</evidence>
<evidence type="ECO:0000312" key="8">
    <source>
        <dbReference type="HGNC" id="HGNC:26820"/>
    </source>
</evidence>